<protein>
    <recommendedName>
        <fullName>Transcriptional regulator SirC</fullName>
    </recommendedName>
</protein>
<gene>
    <name type="primary">sirC</name>
    <name type="synonym">hilC</name>
    <name type="synonym">sprA</name>
    <name type="ordered locus">SL1344_2847</name>
</gene>
<evidence type="ECO:0000250" key="1"/>
<evidence type="ECO:0000255" key="2">
    <source>
        <dbReference type="PROSITE-ProRule" id="PRU00593"/>
    </source>
</evidence>
<sequence>MVLPSMNKSVEAISNNHLQQPNKFPLINGLADVRDYYVANCLLFKLNKGSLRIENEFGEFIERSAPCLFLLEKDQTITLSMSEIEGHIDFSSLEVSYDLMQKFYKVFYSTRNYNDRELSLKTKPKYFFHADLLPGMSDTFDSILHGVACPRVCSNVSIDDHDYSYFSLMYLISAFVRKPGGFDFLERAIKITTKEKVYNIIISDLTRKWSQAEVAGKLFMSVSSLKRKLAAEEVSFSKIYLDARMNQAIKLLRMGAGNISQVATMCGYDTPSYFIAIFKRHFKITPLSFMRTMNH</sequence>
<comment type="function">
    <text evidence="1">Positive regulator of the expression of the invasion-associated type III secretion system encoded within SPI-1 (pathogenicity island 1).</text>
</comment>
<feature type="chain" id="PRO_0000405420" description="Transcriptional regulator SirC">
    <location>
        <begin position="1"/>
        <end position="295"/>
    </location>
</feature>
<feature type="domain" description="HTH araC/xylS-type" evidence="2">
    <location>
        <begin position="195"/>
        <end position="292"/>
    </location>
</feature>
<feature type="DNA-binding region" description="H-T-H motif" evidence="2">
    <location>
        <begin position="212"/>
        <end position="233"/>
    </location>
</feature>
<feature type="DNA-binding region" description="H-T-H motif" evidence="2">
    <location>
        <begin position="259"/>
        <end position="282"/>
    </location>
</feature>
<reference key="1">
    <citation type="journal article" date="1999" name="Mol. Microbiol.">
        <title>Characterization of SprA, an AraC-like transcriptional regulator encoded within the salmonella typhimurium pathogenicity island 1.</title>
        <authorList>
            <person name="Eichelberg K."/>
            <person name="Hardt W.-D."/>
            <person name="Galan J.E."/>
        </authorList>
    </citation>
    <scope>NUCLEOTIDE SEQUENCE [GENOMIC DNA]</scope>
    <source>
        <strain>SL1344</strain>
    </source>
</reference>
<reference key="2">
    <citation type="journal article" date="1999" name="Mol. Microbiol.">
        <title>Two AraC/XylS family members can independently counteract the effect of repressing sequences upstream of the hilA promoter.</title>
        <authorList>
            <person name="Schechter L.M."/>
            <person name="Damrauer S.M."/>
            <person name="Lee C.A."/>
        </authorList>
    </citation>
    <scope>NUCLEOTIDE SEQUENCE [GENOMIC DNA]</scope>
    <source>
        <strain>SL1344</strain>
    </source>
</reference>
<reference key="3">
    <citation type="journal article" date="2012" name="Proc. Natl. Acad. Sci. U.S.A.">
        <title>The transcriptional landscape and small RNAs of Salmonella enterica serovar Typhimurium.</title>
        <authorList>
            <person name="Kroger C."/>
            <person name="Dillon S.C."/>
            <person name="Cameron A.D."/>
            <person name="Papenfort K."/>
            <person name="Sivasankaran S.K."/>
            <person name="Hokamp K."/>
            <person name="Chao Y."/>
            <person name="Sittka A."/>
            <person name="Hebrard M."/>
            <person name="Handler K."/>
            <person name="Colgan A."/>
            <person name="Leekitcharoenphon P."/>
            <person name="Langridge G.C."/>
            <person name="Lohan A.J."/>
            <person name="Loftus B."/>
            <person name="Lucchini S."/>
            <person name="Ussery D.W."/>
            <person name="Dorman C.J."/>
            <person name="Thomson N.R."/>
            <person name="Vogel J."/>
            <person name="Hinton J.C."/>
        </authorList>
    </citation>
    <scope>NUCLEOTIDE SEQUENCE [LARGE SCALE GENOMIC DNA]</scope>
    <source>
        <strain>SL1344</strain>
    </source>
</reference>
<accession>E1WAB2</accession>
<accession>Q9R3W3</accession>
<accession>Q9XCQ0</accession>
<name>SIRC_SALTS</name>
<dbReference type="EMBL" id="AF148689">
    <property type="protein sequence ID" value="AAD37784.1"/>
    <property type="molecule type" value="Genomic_DNA"/>
</dbReference>
<dbReference type="EMBL" id="AF124397">
    <property type="protein sequence ID" value="AAD21080.1"/>
    <property type="molecule type" value="Genomic_DNA"/>
</dbReference>
<dbReference type="EMBL" id="FQ312003">
    <property type="protein sequence ID" value="CBW18945.1"/>
    <property type="molecule type" value="Genomic_DNA"/>
</dbReference>
<dbReference type="RefSeq" id="WP_000243999.1">
    <property type="nucleotide sequence ID" value="NZ_QASL01000017.1"/>
</dbReference>
<dbReference type="SMR" id="E1WAB2"/>
<dbReference type="KEGG" id="sey:SL1344_2847"/>
<dbReference type="PATRIC" id="fig|216597.6.peg.3168"/>
<dbReference type="HOGENOM" id="CLU_000445_81_4_6"/>
<dbReference type="BioCyc" id="SENT216597:SL1344_RS14845-MONOMER"/>
<dbReference type="Proteomes" id="UP000008962">
    <property type="component" value="Chromosome"/>
</dbReference>
<dbReference type="GO" id="GO:0005829">
    <property type="term" value="C:cytosol"/>
    <property type="evidence" value="ECO:0007669"/>
    <property type="project" value="TreeGrafter"/>
</dbReference>
<dbReference type="GO" id="GO:0003700">
    <property type="term" value="F:DNA-binding transcription factor activity"/>
    <property type="evidence" value="ECO:0007669"/>
    <property type="project" value="InterPro"/>
</dbReference>
<dbReference type="GO" id="GO:0000976">
    <property type="term" value="F:transcription cis-regulatory region binding"/>
    <property type="evidence" value="ECO:0007669"/>
    <property type="project" value="TreeGrafter"/>
</dbReference>
<dbReference type="Gene3D" id="1.10.10.60">
    <property type="entry name" value="Homeodomain-like"/>
    <property type="match status" value="1"/>
</dbReference>
<dbReference type="InterPro" id="IPR009057">
    <property type="entry name" value="Homeodomain-like_sf"/>
</dbReference>
<dbReference type="InterPro" id="IPR018060">
    <property type="entry name" value="HTH_AraC"/>
</dbReference>
<dbReference type="InterPro" id="IPR018062">
    <property type="entry name" value="HTH_AraC-typ_CS"/>
</dbReference>
<dbReference type="InterPro" id="IPR020449">
    <property type="entry name" value="Tscrpt_reg_AraC-type_HTH"/>
</dbReference>
<dbReference type="NCBIfam" id="NF011618">
    <property type="entry name" value="PRK15044.1"/>
    <property type="match status" value="1"/>
</dbReference>
<dbReference type="PANTHER" id="PTHR47894">
    <property type="entry name" value="HTH-TYPE TRANSCRIPTIONAL REGULATOR GADX"/>
    <property type="match status" value="1"/>
</dbReference>
<dbReference type="PANTHER" id="PTHR47894:SF4">
    <property type="entry name" value="HTH-TYPE TRANSCRIPTIONAL REGULATOR GADX"/>
    <property type="match status" value="1"/>
</dbReference>
<dbReference type="Pfam" id="PF12833">
    <property type="entry name" value="HTH_18"/>
    <property type="match status" value="1"/>
</dbReference>
<dbReference type="PRINTS" id="PR00032">
    <property type="entry name" value="HTHARAC"/>
</dbReference>
<dbReference type="SMART" id="SM00342">
    <property type="entry name" value="HTH_ARAC"/>
    <property type="match status" value="1"/>
</dbReference>
<dbReference type="SUPFAM" id="SSF46689">
    <property type="entry name" value="Homeodomain-like"/>
    <property type="match status" value="1"/>
</dbReference>
<dbReference type="PROSITE" id="PS00041">
    <property type="entry name" value="HTH_ARAC_FAMILY_1"/>
    <property type="match status" value="1"/>
</dbReference>
<dbReference type="PROSITE" id="PS01124">
    <property type="entry name" value="HTH_ARAC_FAMILY_2"/>
    <property type="match status" value="1"/>
</dbReference>
<organism>
    <name type="scientific">Salmonella typhimurium (strain SL1344)</name>
    <dbReference type="NCBI Taxonomy" id="216597"/>
    <lineage>
        <taxon>Bacteria</taxon>
        <taxon>Pseudomonadati</taxon>
        <taxon>Pseudomonadota</taxon>
        <taxon>Gammaproteobacteria</taxon>
        <taxon>Enterobacterales</taxon>
        <taxon>Enterobacteriaceae</taxon>
        <taxon>Salmonella</taxon>
    </lineage>
</organism>
<keyword id="KW-0010">Activator</keyword>
<keyword id="KW-0238">DNA-binding</keyword>
<keyword id="KW-0804">Transcription</keyword>
<keyword id="KW-0805">Transcription regulation</keyword>
<proteinExistence type="inferred from homology"/>